<name>SSTT_VIBVY</name>
<sequence length="406" mass="42227">MQHNSLIARFARGNLVIQILVGIILGISLALVSPSSAESVGMLGSLFVGALKAIAPILVFILVAASIANQKKNQHTHMRPIIVMYLAGTFFAALTAVVLSFMFPTTLTLVTGAEGANPPQGIMEVIKTLLFKLVDNPVNALMSANYIGILAWGVGLGLALHHASDTTKAVFEDLSHSVSHIVRFIIRLAPFGIFGLVASTFATTGFDALAGYAHLLVVLLSAMAIIALIVNPAMVYVKTKQNPYPLVFQCLRESGVTAFFTRSSAANIPVNMALCEKLKLDEDTYSVSIPLGATINMAGAAITITTLTLAAVHTMGIEVDLMTALLLSVVAAVSACGASGVAGGSLLLIPLACGLFGISNDIAMQVVAVGFIIGVIQDSAETALNSSTDVVFTAAVCESEAQKAKG</sequence>
<keyword id="KW-0029">Amino-acid transport</keyword>
<keyword id="KW-0997">Cell inner membrane</keyword>
<keyword id="KW-1003">Cell membrane</keyword>
<keyword id="KW-0472">Membrane</keyword>
<keyword id="KW-0769">Symport</keyword>
<keyword id="KW-0812">Transmembrane</keyword>
<keyword id="KW-1133">Transmembrane helix</keyword>
<keyword id="KW-0813">Transport</keyword>
<accession>Q7MGA3</accession>
<comment type="function">
    <text evidence="1">Involved in the import of serine and threonine into the cell, with the concomitant import of sodium (symport system).</text>
</comment>
<comment type="catalytic activity">
    <reaction evidence="1">
        <text>L-serine(in) + Na(+)(in) = L-serine(out) + Na(+)(out)</text>
        <dbReference type="Rhea" id="RHEA:29575"/>
        <dbReference type="ChEBI" id="CHEBI:29101"/>
        <dbReference type="ChEBI" id="CHEBI:33384"/>
    </reaction>
    <physiologicalReaction direction="right-to-left" evidence="1">
        <dbReference type="Rhea" id="RHEA:29577"/>
    </physiologicalReaction>
</comment>
<comment type="catalytic activity">
    <reaction evidence="1">
        <text>L-threonine(in) + Na(+)(in) = L-threonine(out) + Na(+)(out)</text>
        <dbReference type="Rhea" id="RHEA:69999"/>
        <dbReference type="ChEBI" id="CHEBI:29101"/>
        <dbReference type="ChEBI" id="CHEBI:57926"/>
    </reaction>
    <physiologicalReaction direction="right-to-left" evidence="1">
        <dbReference type="Rhea" id="RHEA:70001"/>
    </physiologicalReaction>
</comment>
<comment type="subcellular location">
    <subcellularLocation>
        <location evidence="1">Cell inner membrane</location>
        <topology evidence="1">Multi-pass membrane protein</topology>
    </subcellularLocation>
</comment>
<comment type="similarity">
    <text evidence="1">Belongs to the dicarboxylate/amino acid:cation symporter (DAACS) (TC 2.A.23) family.</text>
</comment>
<feature type="chain" id="PRO_0000309156" description="Serine/threonine transporter SstT">
    <location>
        <begin position="1"/>
        <end position="406"/>
    </location>
</feature>
<feature type="transmembrane region" description="Helical" evidence="1">
    <location>
        <begin position="15"/>
        <end position="35"/>
    </location>
</feature>
<feature type="transmembrane region" description="Helical" evidence="1">
    <location>
        <begin position="47"/>
        <end position="67"/>
    </location>
</feature>
<feature type="transmembrane region" description="Helical" evidence="1">
    <location>
        <begin position="81"/>
        <end position="101"/>
    </location>
</feature>
<feature type="transmembrane region" description="Helical" evidence="1">
    <location>
        <begin position="140"/>
        <end position="160"/>
    </location>
</feature>
<feature type="transmembrane region" description="Helical" evidence="1">
    <location>
        <begin position="191"/>
        <end position="211"/>
    </location>
</feature>
<feature type="transmembrane region" description="Helical" evidence="1">
    <location>
        <begin position="215"/>
        <end position="235"/>
    </location>
</feature>
<feature type="transmembrane region" description="Helical" evidence="1">
    <location>
        <begin position="289"/>
        <end position="309"/>
    </location>
</feature>
<feature type="transmembrane region" description="Helical" evidence="1">
    <location>
        <begin position="315"/>
        <end position="335"/>
    </location>
</feature>
<feature type="transmembrane region" description="Helical" evidence="1">
    <location>
        <begin position="362"/>
        <end position="382"/>
    </location>
</feature>
<evidence type="ECO:0000255" key="1">
    <source>
        <dbReference type="HAMAP-Rule" id="MF_01582"/>
    </source>
</evidence>
<dbReference type="EMBL" id="BA000038">
    <property type="protein sequence ID" value="BAC96092.1"/>
    <property type="molecule type" value="Genomic_DNA"/>
</dbReference>
<dbReference type="RefSeq" id="WP_011151497.1">
    <property type="nucleotide sequence ID" value="NC_005140.1"/>
</dbReference>
<dbReference type="SMR" id="Q7MGA3"/>
<dbReference type="STRING" id="672.VV93_v1c30790"/>
<dbReference type="KEGG" id="vvy:VVA0066"/>
<dbReference type="eggNOG" id="COG3633">
    <property type="taxonomic scope" value="Bacteria"/>
</dbReference>
<dbReference type="HOGENOM" id="CLU_044581_0_0_6"/>
<dbReference type="Proteomes" id="UP000002675">
    <property type="component" value="Chromosome II"/>
</dbReference>
<dbReference type="GO" id="GO:0005886">
    <property type="term" value="C:plasma membrane"/>
    <property type="evidence" value="ECO:0007669"/>
    <property type="project" value="UniProtKB-SubCell"/>
</dbReference>
<dbReference type="GO" id="GO:0005295">
    <property type="term" value="F:neutral L-amino acid:sodium symporter activity"/>
    <property type="evidence" value="ECO:0007669"/>
    <property type="project" value="TreeGrafter"/>
</dbReference>
<dbReference type="GO" id="GO:0032329">
    <property type="term" value="P:serine transport"/>
    <property type="evidence" value="ECO:0007669"/>
    <property type="project" value="InterPro"/>
</dbReference>
<dbReference type="GO" id="GO:0015826">
    <property type="term" value="P:threonine transport"/>
    <property type="evidence" value="ECO:0007669"/>
    <property type="project" value="InterPro"/>
</dbReference>
<dbReference type="FunFam" id="1.10.3860.10:FF:000003">
    <property type="entry name" value="Serine/threonine transporter sstT"/>
    <property type="match status" value="1"/>
</dbReference>
<dbReference type="Gene3D" id="1.10.3860.10">
    <property type="entry name" value="Sodium:dicarboxylate symporter"/>
    <property type="match status" value="1"/>
</dbReference>
<dbReference type="HAMAP" id="MF_01582">
    <property type="entry name" value="Ser_Thr_transp_SstT"/>
    <property type="match status" value="1"/>
</dbReference>
<dbReference type="InterPro" id="IPR001991">
    <property type="entry name" value="Na-dicarboxylate_symporter"/>
</dbReference>
<dbReference type="InterPro" id="IPR036458">
    <property type="entry name" value="Na:dicarbo_symporter_sf"/>
</dbReference>
<dbReference type="InterPro" id="IPR023025">
    <property type="entry name" value="Ser_Thr_transp_SstT"/>
</dbReference>
<dbReference type="NCBIfam" id="NF010151">
    <property type="entry name" value="PRK13628.1"/>
    <property type="match status" value="1"/>
</dbReference>
<dbReference type="PANTHER" id="PTHR42865">
    <property type="entry name" value="PROTON/GLUTAMATE-ASPARTATE SYMPORTER"/>
    <property type="match status" value="1"/>
</dbReference>
<dbReference type="PANTHER" id="PTHR42865:SF8">
    <property type="entry name" value="SERINE_THREONINE TRANSPORTER SSTT"/>
    <property type="match status" value="1"/>
</dbReference>
<dbReference type="Pfam" id="PF00375">
    <property type="entry name" value="SDF"/>
    <property type="match status" value="1"/>
</dbReference>
<dbReference type="PRINTS" id="PR00173">
    <property type="entry name" value="EDTRNSPORT"/>
</dbReference>
<dbReference type="SUPFAM" id="SSF118215">
    <property type="entry name" value="Proton glutamate symport protein"/>
    <property type="match status" value="1"/>
</dbReference>
<protein>
    <recommendedName>
        <fullName evidence="1">Serine/threonine transporter SstT</fullName>
    </recommendedName>
    <alternativeName>
        <fullName evidence="1">Na(+)/serine-threonine symporter</fullName>
    </alternativeName>
</protein>
<organism>
    <name type="scientific">Vibrio vulnificus (strain YJ016)</name>
    <dbReference type="NCBI Taxonomy" id="196600"/>
    <lineage>
        <taxon>Bacteria</taxon>
        <taxon>Pseudomonadati</taxon>
        <taxon>Pseudomonadota</taxon>
        <taxon>Gammaproteobacteria</taxon>
        <taxon>Vibrionales</taxon>
        <taxon>Vibrionaceae</taxon>
        <taxon>Vibrio</taxon>
    </lineage>
</organism>
<proteinExistence type="inferred from homology"/>
<reference key="1">
    <citation type="journal article" date="2003" name="Genome Res.">
        <title>Comparative genome analysis of Vibrio vulnificus, a marine pathogen.</title>
        <authorList>
            <person name="Chen C.-Y."/>
            <person name="Wu K.-M."/>
            <person name="Chang Y.-C."/>
            <person name="Chang C.-H."/>
            <person name="Tsai H.-C."/>
            <person name="Liao T.-L."/>
            <person name="Liu Y.-M."/>
            <person name="Chen H.-J."/>
            <person name="Shen A.B.-T."/>
            <person name="Li J.-C."/>
            <person name="Su T.-L."/>
            <person name="Shao C.-P."/>
            <person name="Lee C.-T."/>
            <person name="Hor L.-I."/>
            <person name="Tsai S.-F."/>
        </authorList>
    </citation>
    <scope>NUCLEOTIDE SEQUENCE [LARGE SCALE GENOMIC DNA]</scope>
    <source>
        <strain>YJ016</strain>
    </source>
</reference>
<gene>
    <name evidence="1" type="primary">sstT</name>
    <name type="ordered locus">VVA0066</name>
</gene>